<proteinExistence type="inferred from homology"/>
<dbReference type="EC" id="2.7.7.61" evidence="1"/>
<dbReference type="EMBL" id="CP000802">
    <property type="protein sequence ID" value="ABV05045.1"/>
    <property type="molecule type" value="Genomic_DNA"/>
</dbReference>
<dbReference type="RefSeq" id="WP_000550414.1">
    <property type="nucleotide sequence ID" value="NC_009800.1"/>
</dbReference>
<dbReference type="SMR" id="A7ZXP1"/>
<dbReference type="KEGG" id="ecx:EcHS_A0665"/>
<dbReference type="HOGENOM" id="CLU_104529_1_1_6"/>
<dbReference type="GO" id="GO:0050519">
    <property type="term" value="F:holo-citrate lyase synthase activity"/>
    <property type="evidence" value="ECO:0007669"/>
    <property type="project" value="UniProtKB-UniRule"/>
</dbReference>
<dbReference type="GO" id="GO:0051191">
    <property type="term" value="P:prosthetic group biosynthetic process"/>
    <property type="evidence" value="ECO:0007669"/>
    <property type="project" value="InterPro"/>
</dbReference>
<dbReference type="HAMAP" id="MF_00398">
    <property type="entry name" value="CitX"/>
    <property type="match status" value="1"/>
</dbReference>
<dbReference type="InterPro" id="IPR005551">
    <property type="entry name" value="CitX"/>
</dbReference>
<dbReference type="NCBIfam" id="TIGR03124">
    <property type="entry name" value="citrate_citX"/>
    <property type="match status" value="1"/>
</dbReference>
<dbReference type="NCBIfam" id="NF002383">
    <property type="entry name" value="PRK01392.1"/>
    <property type="match status" value="1"/>
</dbReference>
<dbReference type="Pfam" id="PF03802">
    <property type="entry name" value="CitX"/>
    <property type="match status" value="1"/>
</dbReference>
<comment type="function">
    <text evidence="1">Transfers 2-(5''-triphosphoribosyl)-3'-dephosphocoenzyme-A on a serine residue to the apo-acyl carrier protein (gamma chain) of the citrate lyase to yield holo-acyl carrier protein.</text>
</comment>
<comment type="catalytic activity">
    <reaction evidence="1">
        <text>apo-[citrate lyase ACP] + 2'-(5''-triphospho-alpha-D-ribosyl)-3'-dephospho-CoA = holo-[citrate lyase ACP] + diphosphate</text>
        <dbReference type="Rhea" id="RHEA:16333"/>
        <dbReference type="Rhea" id="RHEA-COMP:10157"/>
        <dbReference type="Rhea" id="RHEA-COMP:10158"/>
        <dbReference type="ChEBI" id="CHEBI:29999"/>
        <dbReference type="ChEBI" id="CHEBI:33019"/>
        <dbReference type="ChEBI" id="CHEBI:61378"/>
        <dbReference type="ChEBI" id="CHEBI:82683"/>
        <dbReference type="EC" id="2.7.7.61"/>
    </reaction>
</comment>
<comment type="similarity">
    <text evidence="1">Belongs to the CitX family.</text>
</comment>
<evidence type="ECO:0000255" key="1">
    <source>
        <dbReference type="HAMAP-Rule" id="MF_00398"/>
    </source>
</evidence>
<organism>
    <name type="scientific">Escherichia coli O9:H4 (strain HS)</name>
    <dbReference type="NCBI Taxonomy" id="331112"/>
    <lineage>
        <taxon>Bacteria</taxon>
        <taxon>Pseudomonadati</taxon>
        <taxon>Pseudomonadota</taxon>
        <taxon>Gammaproteobacteria</taxon>
        <taxon>Enterobacterales</taxon>
        <taxon>Enterobacteriaceae</taxon>
        <taxon>Escherichia</taxon>
    </lineage>
</organism>
<protein>
    <recommendedName>
        <fullName>Apo-citrate lyase phosphoribosyl-dephospho-CoA transferase</fullName>
        <ecNumber evidence="1">2.7.7.61</ecNumber>
    </recommendedName>
    <alternativeName>
        <fullName evidence="1">Apo-ACP nucleodityltransferase</fullName>
    </alternativeName>
    <alternativeName>
        <fullName evidence="1">Holo-ACP synthase</fullName>
    </alternativeName>
    <alternativeName>
        <fullName evidence="1">Holo-citrate lyase synthase</fullName>
    </alternativeName>
</protein>
<name>CITX_ECOHS</name>
<feature type="chain" id="PRO_1000060794" description="Apo-citrate lyase phosphoribosyl-dephospho-CoA transferase">
    <location>
        <begin position="1"/>
        <end position="183"/>
    </location>
</feature>
<keyword id="KW-0548">Nucleotidyltransferase</keyword>
<keyword id="KW-0808">Transferase</keyword>
<gene>
    <name evidence="1" type="primary">citX</name>
    <name type="ordered locus">EcHS_A0665</name>
</gene>
<reference key="1">
    <citation type="journal article" date="2008" name="J. Bacteriol.">
        <title>The pangenome structure of Escherichia coli: comparative genomic analysis of E. coli commensal and pathogenic isolates.</title>
        <authorList>
            <person name="Rasko D.A."/>
            <person name="Rosovitz M.J."/>
            <person name="Myers G.S.A."/>
            <person name="Mongodin E.F."/>
            <person name="Fricke W.F."/>
            <person name="Gajer P."/>
            <person name="Crabtree J."/>
            <person name="Sebaihia M."/>
            <person name="Thomson N.R."/>
            <person name="Chaudhuri R."/>
            <person name="Henderson I.R."/>
            <person name="Sperandio V."/>
            <person name="Ravel J."/>
        </authorList>
    </citation>
    <scope>NUCLEOTIDE SEQUENCE [LARGE SCALE GENOMIC DNA]</scope>
    <source>
        <strain>HS</strain>
    </source>
</reference>
<sequence length="183" mass="20286">MHLLPELASHHAVSIPELLVSRDERQARQHVWLKRHPVPLVSFTVVAPGPIKDCEVTRRIFNHGVTALRALAAKQGWQIQEQAALVSASGPEGMLSIAAPARDLKLATIELEHSHPLGRLWDIDVLTPEGEILSRRDYSLPPRRCLLCEQSAAVCARGKTHQLTDLLNRMEALLNDVDACNVN</sequence>
<accession>A7ZXP1</accession>